<sequence>MNIENYLSETLAKVFQKLGYAESFAKVVTSTREDVGHFQCNGAMPLAKFAKKPPLAIAEEIVEHIDAEDIFAKLEVAKPGFINITLAPKFLADTTNRFLNSNKFGVQNNLPNRKVVLDFGGPNVAKPMHVGHIRSALLGDALQRIHRFCGDTVISDVHLGDWGTQMGMLIEEIKLQSPQLVYFDENYTGEYPTESPITVQELAEIYPRASKRCKSDINEMEKARLATFELQQGRRGYVALWQHFVRISIDAVKKDFDSLDVHFDLWLGESDANKFIDEMISYFQANNFIYEDEGAWVIDTNKDGVPPLIVIKKDGGVMYGTTDLATLWQRSKDLDPDEIIYVVDKRQSLHFKQVFSVAERTKVVSEKCKLKHVAFGTVNGKDGRPFKTREGGVMHLADLISQAKEYAKNRMPDENDDSIIDQIAMATIKFGDLINNYANDYFFDLEKFAQHEGKTGPYLLYTVVRAKSILRKIFGDNYDIKSLAKDYKVVNAHNEYEEKLQLQLIQFPIAVQRAYENSQPHHICEYAYSLANSFNKFYVNCPINNLDDESLKKARIALCMATVKAMTIASDLIGISIPERM</sequence>
<accession>A7NDV6</accession>
<gene>
    <name evidence="1" type="primary">argS</name>
    <name type="ordered locus">FTA_1684</name>
</gene>
<keyword id="KW-0030">Aminoacyl-tRNA synthetase</keyword>
<keyword id="KW-0067">ATP-binding</keyword>
<keyword id="KW-0963">Cytoplasm</keyword>
<keyword id="KW-0436">Ligase</keyword>
<keyword id="KW-0547">Nucleotide-binding</keyword>
<keyword id="KW-0648">Protein biosynthesis</keyword>
<organism>
    <name type="scientific">Francisella tularensis subsp. holarctica (strain FTNF002-00 / FTA)</name>
    <dbReference type="NCBI Taxonomy" id="458234"/>
    <lineage>
        <taxon>Bacteria</taxon>
        <taxon>Pseudomonadati</taxon>
        <taxon>Pseudomonadota</taxon>
        <taxon>Gammaproteobacteria</taxon>
        <taxon>Thiotrichales</taxon>
        <taxon>Francisellaceae</taxon>
        <taxon>Francisella</taxon>
    </lineage>
</organism>
<evidence type="ECO:0000255" key="1">
    <source>
        <dbReference type="HAMAP-Rule" id="MF_00123"/>
    </source>
</evidence>
<dbReference type="EC" id="6.1.1.19" evidence="1"/>
<dbReference type="EMBL" id="CP000803">
    <property type="protein sequence ID" value="ABU62159.1"/>
    <property type="molecule type" value="Genomic_DNA"/>
</dbReference>
<dbReference type="RefSeq" id="WP_010031328.1">
    <property type="nucleotide sequence ID" value="NC_009749.1"/>
</dbReference>
<dbReference type="SMR" id="A7NDV6"/>
<dbReference type="KEGG" id="fta:FTA_1684"/>
<dbReference type="HOGENOM" id="CLU_006406_5_1_6"/>
<dbReference type="GO" id="GO:0005737">
    <property type="term" value="C:cytoplasm"/>
    <property type="evidence" value="ECO:0007669"/>
    <property type="project" value="UniProtKB-SubCell"/>
</dbReference>
<dbReference type="GO" id="GO:0004814">
    <property type="term" value="F:arginine-tRNA ligase activity"/>
    <property type="evidence" value="ECO:0007669"/>
    <property type="project" value="UniProtKB-UniRule"/>
</dbReference>
<dbReference type="GO" id="GO:0005524">
    <property type="term" value="F:ATP binding"/>
    <property type="evidence" value="ECO:0007669"/>
    <property type="project" value="UniProtKB-UniRule"/>
</dbReference>
<dbReference type="GO" id="GO:0006420">
    <property type="term" value="P:arginyl-tRNA aminoacylation"/>
    <property type="evidence" value="ECO:0007669"/>
    <property type="project" value="UniProtKB-UniRule"/>
</dbReference>
<dbReference type="CDD" id="cd00671">
    <property type="entry name" value="ArgRS_core"/>
    <property type="match status" value="1"/>
</dbReference>
<dbReference type="Gene3D" id="3.30.1360.70">
    <property type="entry name" value="Arginyl tRNA synthetase N-terminal domain"/>
    <property type="match status" value="1"/>
</dbReference>
<dbReference type="Gene3D" id="3.40.50.620">
    <property type="entry name" value="HUPs"/>
    <property type="match status" value="1"/>
</dbReference>
<dbReference type="Gene3D" id="1.10.730.10">
    <property type="entry name" value="Isoleucyl-tRNA Synthetase, Domain 1"/>
    <property type="match status" value="1"/>
</dbReference>
<dbReference type="HAMAP" id="MF_00123">
    <property type="entry name" value="Arg_tRNA_synth"/>
    <property type="match status" value="1"/>
</dbReference>
<dbReference type="InterPro" id="IPR001412">
    <property type="entry name" value="aa-tRNA-synth_I_CS"/>
</dbReference>
<dbReference type="InterPro" id="IPR001278">
    <property type="entry name" value="Arg-tRNA-ligase"/>
</dbReference>
<dbReference type="InterPro" id="IPR005148">
    <property type="entry name" value="Arg-tRNA-synth_N"/>
</dbReference>
<dbReference type="InterPro" id="IPR036695">
    <property type="entry name" value="Arg-tRNA-synth_N_sf"/>
</dbReference>
<dbReference type="InterPro" id="IPR035684">
    <property type="entry name" value="ArgRS_core"/>
</dbReference>
<dbReference type="InterPro" id="IPR008909">
    <property type="entry name" value="DALR_anticod-bd"/>
</dbReference>
<dbReference type="InterPro" id="IPR014729">
    <property type="entry name" value="Rossmann-like_a/b/a_fold"/>
</dbReference>
<dbReference type="InterPro" id="IPR009080">
    <property type="entry name" value="tRNAsynth_Ia_anticodon-bd"/>
</dbReference>
<dbReference type="NCBIfam" id="TIGR00456">
    <property type="entry name" value="argS"/>
    <property type="match status" value="1"/>
</dbReference>
<dbReference type="PANTHER" id="PTHR11956:SF5">
    <property type="entry name" value="ARGININE--TRNA LIGASE, CYTOPLASMIC"/>
    <property type="match status" value="1"/>
</dbReference>
<dbReference type="PANTHER" id="PTHR11956">
    <property type="entry name" value="ARGINYL-TRNA SYNTHETASE"/>
    <property type="match status" value="1"/>
</dbReference>
<dbReference type="Pfam" id="PF03485">
    <property type="entry name" value="Arg_tRNA_synt_N"/>
    <property type="match status" value="1"/>
</dbReference>
<dbReference type="Pfam" id="PF05746">
    <property type="entry name" value="DALR_1"/>
    <property type="match status" value="1"/>
</dbReference>
<dbReference type="Pfam" id="PF00750">
    <property type="entry name" value="tRNA-synt_1d"/>
    <property type="match status" value="1"/>
</dbReference>
<dbReference type="PRINTS" id="PR01038">
    <property type="entry name" value="TRNASYNTHARG"/>
</dbReference>
<dbReference type="SMART" id="SM01016">
    <property type="entry name" value="Arg_tRNA_synt_N"/>
    <property type="match status" value="1"/>
</dbReference>
<dbReference type="SMART" id="SM00836">
    <property type="entry name" value="DALR_1"/>
    <property type="match status" value="1"/>
</dbReference>
<dbReference type="SUPFAM" id="SSF47323">
    <property type="entry name" value="Anticodon-binding domain of a subclass of class I aminoacyl-tRNA synthetases"/>
    <property type="match status" value="1"/>
</dbReference>
<dbReference type="SUPFAM" id="SSF55190">
    <property type="entry name" value="Arginyl-tRNA synthetase (ArgRS), N-terminal 'additional' domain"/>
    <property type="match status" value="1"/>
</dbReference>
<dbReference type="SUPFAM" id="SSF52374">
    <property type="entry name" value="Nucleotidylyl transferase"/>
    <property type="match status" value="1"/>
</dbReference>
<dbReference type="PROSITE" id="PS00178">
    <property type="entry name" value="AA_TRNA_LIGASE_I"/>
    <property type="match status" value="1"/>
</dbReference>
<proteinExistence type="inferred from homology"/>
<feature type="chain" id="PRO_1000018030" description="Arginine--tRNA ligase">
    <location>
        <begin position="1"/>
        <end position="581"/>
    </location>
</feature>
<feature type="short sequence motif" description="'HIGH' region">
    <location>
        <begin position="122"/>
        <end position="132"/>
    </location>
</feature>
<comment type="catalytic activity">
    <reaction evidence="1">
        <text>tRNA(Arg) + L-arginine + ATP = L-arginyl-tRNA(Arg) + AMP + diphosphate</text>
        <dbReference type="Rhea" id="RHEA:20301"/>
        <dbReference type="Rhea" id="RHEA-COMP:9658"/>
        <dbReference type="Rhea" id="RHEA-COMP:9673"/>
        <dbReference type="ChEBI" id="CHEBI:30616"/>
        <dbReference type="ChEBI" id="CHEBI:32682"/>
        <dbReference type="ChEBI" id="CHEBI:33019"/>
        <dbReference type="ChEBI" id="CHEBI:78442"/>
        <dbReference type="ChEBI" id="CHEBI:78513"/>
        <dbReference type="ChEBI" id="CHEBI:456215"/>
        <dbReference type="EC" id="6.1.1.19"/>
    </reaction>
</comment>
<comment type="subunit">
    <text evidence="1">Monomer.</text>
</comment>
<comment type="subcellular location">
    <subcellularLocation>
        <location evidence="1">Cytoplasm</location>
    </subcellularLocation>
</comment>
<comment type="similarity">
    <text evidence="1">Belongs to the class-I aminoacyl-tRNA synthetase family.</text>
</comment>
<protein>
    <recommendedName>
        <fullName evidence="1">Arginine--tRNA ligase</fullName>
        <ecNumber evidence="1">6.1.1.19</ecNumber>
    </recommendedName>
    <alternativeName>
        <fullName evidence="1">Arginyl-tRNA synthetase</fullName>
        <shortName evidence="1">ArgRS</shortName>
    </alternativeName>
</protein>
<reference key="1">
    <citation type="journal article" date="2009" name="PLoS ONE">
        <title>Complete genome sequence of Francisella tularensis subspecies holarctica FTNF002-00.</title>
        <authorList>
            <person name="Barabote R.D."/>
            <person name="Xie G."/>
            <person name="Brettin T.S."/>
            <person name="Hinrichs S.H."/>
            <person name="Fey P.D."/>
            <person name="Jay J.J."/>
            <person name="Engle J.L."/>
            <person name="Godbole S.D."/>
            <person name="Noronha J.M."/>
            <person name="Scheuermann R.H."/>
            <person name="Zhou L.W."/>
            <person name="Lion C."/>
            <person name="Dempsey M.P."/>
        </authorList>
    </citation>
    <scope>NUCLEOTIDE SEQUENCE [LARGE SCALE GENOMIC DNA]</scope>
    <source>
        <strain>FTNF002-00 / FTA</strain>
    </source>
</reference>
<name>SYR_FRATF</name>